<proteinExistence type="inferred from homology"/>
<gene>
    <name evidence="1" type="primary">bioB</name>
    <name type="ordered locus">Dvul_0690</name>
</gene>
<protein>
    <recommendedName>
        <fullName evidence="1">Biotin synthase</fullName>
        <ecNumber evidence="1">2.8.1.6</ecNumber>
    </recommendedName>
</protein>
<organism>
    <name type="scientific">Nitratidesulfovibrio vulgaris (strain DP4)</name>
    <name type="common">Desulfovibrio vulgaris</name>
    <dbReference type="NCBI Taxonomy" id="391774"/>
    <lineage>
        <taxon>Bacteria</taxon>
        <taxon>Pseudomonadati</taxon>
        <taxon>Thermodesulfobacteriota</taxon>
        <taxon>Desulfovibrionia</taxon>
        <taxon>Desulfovibrionales</taxon>
        <taxon>Desulfovibrionaceae</taxon>
        <taxon>Nitratidesulfovibrio</taxon>
    </lineage>
</organism>
<keyword id="KW-0001">2Fe-2S</keyword>
<keyword id="KW-0004">4Fe-4S</keyword>
<keyword id="KW-0093">Biotin biosynthesis</keyword>
<keyword id="KW-0408">Iron</keyword>
<keyword id="KW-0411">Iron-sulfur</keyword>
<keyword id="KW-0479">Metal-binding</keyword>
<keyword id="KW-0949">S-adenosyl-L-methionine</keyword>
<keyword id="KW-0808">Transferase</keyword>
<accession>A1VB97</accession>
<reference key="1">
    <citation type="journal article" date="2009" name="Environ. Microbiol.">
        <title>Contribution of mobile genetic elements to Desulfovibrio vulgaris genome plasticity.</title>
        <authorList>
            <person name="Walker C.B."/>
            <person name="Stolyar S."/>
            <person name="Chivian D."/>
            <person name="Pinel N."/>
            <person name="Gabster J.A."/>
            <person name="Dehal P.S."/>
            <person name="He Z."/>
            <person name="Yang Z.K."/>
            <person name="Yen H.C."/>
            <person name="Zhou J."/>
            <person name="Wall J.D."/>
            <person name="Hazen T.C."/>
            <person name="Arkin A.P."/>
            <person name="Stahl D.A."/>
        </authorList>
    </citation>
    <scope>NUCLEOTIDE SEQUENCE [LARGE SCALE GENOMIC DNA]</scope>
    <source>
        <strain>DP4</strain>
    </source>
</reference>
<sequence length="361" mass="38644">MHNLLENLRRRLLAQRTPEPLPPTSQGLARPSHDVVRGPCDADIPPDARNTMPEGITVEEALAVAELPQKHALDILATAQAIRSVHKGGPAALCGIVNAKSGRCPEDCAFCAQSSHHATGSPVHALLDAETLLRRAEELRQSGAERYGIVTSGTRLTVRELDTLCEAAVRIRRETGIALCGSLGQLTPDAAACLKEAGFSSYHHNLETSRSFFPAICSTHAYDDDIATVRAARAAGLRTCSGGIFGMGETDAQRIELSATLRELDVDSIPVNLLSPIPGTPLQHRPTMPPMRALVSIAIYRLMHPARDILVCGGREATLGPWQSWIFLAGANGMMVGNYLTTTGRDMADDLAMLATLGVRA</sequence>
<name>BIOB_NITV4</name>
<comment type="function">
    <text evidence="1">Catalyzes the conversion of dethiobiotin (DTB) to biotin by the insertion of a sulfur atom into dethiobiotin via a radical-based mechanism.</text>
</comment>
<comment type="catalytic activity">
    <reaction evidence="1">
        <text>(4R,5S)-dethiobiotin + (sulfur carrier)-SH + 2 reduced [2Fe-2S]-[ferredoxin] + 2 S-adenosyl-L-methionine = (sulfur carrier)-H + biotin + 2 5'-deoxyadenosine + 2 L-methionine + 2 oxidized [2Fe-2S]-[ferredoxin]</text>
        <dbReference type="Rhea" id="RHEA:22060"/>
        <dbReference type="Rhea" id="RHEA-COMP:10000"/>
        <dbReference type="Rhea" id="RHEA-COMP:10001"/>
        <dbReference type="Rhea" id="RHEA-COMP:14737"/>
        <dbReference type="Rhea" id="RHEA-COMP:14739"/>
        <dbReference type="ChEBI" id="CHEBI:17319"/>
        <dbReference type="ChEBI" id="CHEBI:29917"/>
        <dbReference type="ChEBI" id="CHEBI:33737"/>
        <dbReference type="ChEBI" id="CHEBI:33738"/>
        <dbReference type="ChEBI" id="CHEBI:57586"/>
        <dbReference type="ChEBI" id="CHEBI:57844"/>
        <dbReference type="ChEBI" id="CHEBI:59789"/>
        <dbReference type="ChEBI" id="CHEBI:64428"/>
        <dbReference type="ChEBI" id="CHEBI:149473"/>
        <dbReference type="EC" id="2.8.1.6"/>
    </reaction>
</comment>
<comment type="cofactor">
    <cofactor evidence="1">
        <name>[4Fe-4S] cluster</name>
        <dbReference type="ChEBI" id="CHEBI:49883"/>
    </cofactor>
    <text evidence="1">Binds 1 [4Fe-4S] cluster. The cluster is coordinated with 3 cysteines and an exchangeable S-adenosyl-L-methionine.</text>
</comment>
<comment type="cofactor">
    <cofactor evidence="1">
        <name>[2Fe-2S] cluster</name>
        <dbReference type="ChEBI" id="CHEBI:190135"/>
    </cofactor>
    <text evidence="1">Binds 1 [2Fe-2S] cluster. The cluster is coordinated with 3 cysteines and 1 arginine.</text>
</comment>
<comment type="pathway">
    <text evidence="1">Cofactor biosynthesis; biotin biosynthesis; biotin from 7,8-diaminononanoate: step 2/2.</text>
</comment>
<comment type="subunit">
    <text evidence="1">Homodimer.</text>
</comment>
<comment type="similarity">
    <text evidence="1">Belongs to the radical SAM superfamily. Biotin synthase family.</text>
</comment>
<dbReference type="EC" id="2.8.1.6" evidence="1"/>
<dbReference type="EMBL" id="CP000527">
    <property type="protein sequence ID" value="ABM27713.1"/>
    <property type="molecule type" value="Genomic_DNA"/>
</dbReference>
<dbReference type="RefSeq" id="WP_011791775.1">
    <property type="nucleotide sequence ID" value="NC_008751.1"/>
</dbReference>
<dbReference type="SMR" id="A1VB97"/>
<dbReference type="KEGG" id="dvl:Dvul_0690"/>
<dbReference type="HOGENOM" id="CLU_033172_2_1_7"/>
<dbReference type="UniPathway" id="UPA00078">
    <property type="reaction ID" value="UER00162"/>
</dbReference>
<dbReference type="Proteomes" id="UP000009173">
    <property type="component" value="Chromosome"/>
</dbReference>
<dbReference type="GO" id="GO:0051537">
    <property type="term" value="F:2 iron, 2 sulfur cluster binding"/>
    <property type="evidence" value="ECO:0007669"/>
    <property type="project" value="UniProtKB-KW"/>
</dbReference>
<dbReference type="GO" id="GO:0051539">
    <property type="term" value="F:4 iron, 4 sulfur cluster binding"/>
    <property type="evidence" value="ECO:0007669"/>
    <property type="project" value="UniProtKB-KW"/>
</dbReference>
<dbReference type="GO" id="GO:0004076">
    <property type="term" value="F:biotin synthase activity"/>
    <property type="evidence" value="ECO:0007669"/>
    <property type="project" value="UniProtKB-UniRule"/>
</dbReference>
<dbReference type="GO" id="GO:0005506">
    <property type="term" value="F:iron ion binding"/>
    <property type="evidence" value="ECO:0007669"/>
    <property type="project" value="UniProtKB-UniRule"/>
</dbReference>
<dbReference type="GO" id="GO:0009102">
    <property type="term" value="P:biotin biosynthetic process"/>
    <property type="evidence" value="ECO:0007669"/>
    <property type="project" value="UniProtKB-UniRule"/>
</dbReference>
<dbReference type="CDD" id="cd01335">
    <property type="entry name" value="Radical_SAM"/>
    <property type="match status" value="1"/>
</dbReference>
<dbReference type="Gene3D" id="3.20.20.70">
    <property type="entry name" value="Aldolase class I"/>
    <property type="match status" value="1"/>
</dbReference>
<dbReference type="HAMAP" id="MF_01694">
    <property type="entry name" value="BioB"/>
    <property type="match status" value="1"/>
</dbReference>
<dbReference type="InterPro" id="IPR013785">
    <property type="entry name" value="Aldolase_TIM"/>
</dbReference>
<dbReference type="InterPro" id="IPR010722">
    <property type="entry name" value="BATS_dom"/>
</dbReference>
<dbReference type="InterPro" id="IPR002684">
    <property type="entry name" value="Biotin_synth/BioAB"/>
</dbReference>
<dbReference type="InterPro" id="IPR024177">
    <property type="entry name" value="Biotin_synthase"/>
</dbReference>
<dbReference type="InterPro" id="IPR006638">
    <property type="entry name" value="Elp3/MiaA/NifB-like_rSAM"/>
</dbReference>
<dbReference type="InterPro" id="IPR007197">
    <property type="entry name" value="rSAM"/>
</dbReference>
<dbReference type="NCBIfam" id="TIGR00433">
    <property type="entry name" value="bioB"/>
    <property type="match status" value="1"/>
</dbReference>
<dbReference type="PANTHER" id="PTHR22976">
    <property type="entry name" value="BIOTIN SYNTHASE"/>
    <property type="match status" value="1"/>
</dbReference>
<dbReference type="PANTHER" id="PTHR22976:SF2">
    <property type="entry name" value="BIOTIN SYNTHASE, MITOCHONDRIAL"/>
    <property type="match status" value="1"/>
</dbReference>
<dbReference type="Pfam" id="PF06968">
    <property type="entry name" value="BATS"/>
    <property type="match status" value="1"/>
</dbReference>
<dbReference type="Pfam" id="PF04055">
    <property type="entry name" value="Radical_SAM"/>
    <property type="match status" value="1"/>
</dbReference>
<dbReference type="PIRSF" id="PIRSF001619">
    <property type="entry name" value="Biotin_synth"/>
    <property type="match status" value="1"/>
</dbReference>
<dbReference type="SFLD" id="SFLDG01278">
    <property type="entry name" value="biotin_synthase_like"/>
    <property type="match status" value="1"/>
</dbReference>
<dbReference type="SFLD" id="SFLDS00029">
    <property type="entry name" value="Radical_SAM"/>
    <property type="match status" value="1"/>
</dbReference>
<dbReference type="SMART" id="SM00876">
    <property type="entry name" value="BATS"/>
    <property type="match status" value="1"/>
</dbReference>
<dbReference type="SMART" id="SM00729">
    <property type="entry name" value="Elp3"/>
    <property type="match status" value="1"/>
</dbReference>
<dbReference type="SUPFAM" id="SSF102114">
    <property type="entry name" value="Radical SAM enzymes"/>
    <property type="match status" value="1"/>
</dbReference>
<dbReference type="PROSITE" id="PS51918">
    <property type="entry name" value="RADICAL_SAM"/>
    <property type="match status" value="1"/>
</dbReference>
<evidence type="ECO:0000255" key="1">
    <source>
        <dbReference type="HAMAP-Rule" id="MF_01694"/>
    </source>
</evidence>
<evidence type="ECO:0000255" key="2">
    <source>
        <dbReference type="PROSITE-ProRule" id="PRU01266"/>
    </source>
</evidence>
<evidence type="ECO:0000256" key="3">
    <source>
        <dbReference type="SAM" id="MobiDB-lite"/>
    </source>
</evidence>
<feature type="chain" id="PRO_0000381353" description="Biotin synthase">
    <location>
        <begin position="1"/>
        <end position="361"/>
    </location>
</feature>
<feature type="domain" description="Radical SAM core" evidence="2">
    <location>
        <begin position="86"/>
        <end position="315"/>
    </location>
</feature>
<feature type="region of interest" description="Disordered" evidence="3">
    <location>
        <begin position="14"/>
        <end position="38"/>
    </location>
</feature>
<feature type="binding site" evidence="1">
    <location>
        <position position="104"/>
    </location>
    <ligand>
        <name>[4Fe-4S] cluster</name>
        <dbReference type="ChEBI" id="CHEBI:49883"/>
        <note>4Fe-4S-S-AdoMet</note>
    </ligand>
</feature>
<feature type="binding site" evidence="1">
    <location>
        <position position="108"/>
    </location>
    <ligand>
        <name>[4Fe-4S] cluster</name>
        <dbReference type="ChEBI" id="CHEBI:49883"/>
        <note>4Fe-4S-S-AdoMet</note>
    </ligand>
</feature>
<feature type="binding site" evidence="1">
    <location>
        <position position="111"/>
    </location>
    <ligand>
        <name>[4Fe-4S] cluster</name>
        <dbReference type="ChEBI" id="CHEBI:49883"/>
        <note>4Fe-4S-S-AdoMet</note>
    </ligand>
</feature>
<feature type="binding site" evidence="1">
    <location>
        <position position="180"/>
    </location>
    <ligand>
        <name>[2Fe-2S] cluster</name>
        <dbReference type="ChEBI" id="CHEBI:190135"/>
    </ligand>
</feature>
<feature type="binding site" evidence="1">
    <location>
        <position position="240"/>
    </location>
    <ligand>
        <name>[2Fe-2S] cluster</name>
        <dbReference type="ChEBI" id="CHEBI:190135"/>
    </ligand>
</feature>